<evidence type="ECO:0000250" key="1"/>
<evidence type="ECO:0000305" key="2"/>
<protein>
    <recommendedName>
        <fullName>Xylulose kinase</fullName>
        <shortName>Xylulokinase</shortName>
        <ecNumber>2.7.1.17</ecNumber>
    </recommendedName>
</protein>
<sequence length="551" mass="59544">MDARTHRRAAGTPRALAERAGRRCCLGWDFSTQQVKVVAVDAELNVFYEDSVHFDRDLPEFGTQGGVHVHKDRLTVTSPVLMWVQALDLILGKMKSSGFDFSQVLALSGAGQQHGSVYWKTGASLALSSLSPALPLHQQLQSCFSISDCPIWMDSSTTAQCHQLEAAVGGAQALSCLTGSRAYERFTGNQIAKLFQKNPEAYSHSERISLVSSFAASLFLGGYSPIDYSDGSGMNLLQIQEKVWSQACLDVCAPHLEEKLGSPVPSCSVVGTISSYYVQRYGFPPGCKVVAFSGDNPASLAGMRLEEGDIAVSLGTSDTLFLWLQKPMPALEGHIFCNPVDPQHYMALLCFKNGSLMREKIRDESASCSWNKFSKALKSTAMGNNGNLGFYFDVMEITPEIIGRHRFNAENMEVSAFPGDVEIRALIEGQFMAKRIHAEGLGYRVMPKTKILATGGASHNKDILQVLADVFGAPVYVIDTTSSACVGSAYRAFHGLAGGTGVAFSEVVKSAPQPSLAATPNPGASQVYAALLPRYSALEQRILSTAQRPLE</sequence>
<dbReference type="EC" id="2.7.1.17"/>
<dbReference type="EMBL" id="AK143476">
    <property type="protein sequence ID" value="BAE25393.1"/>
    <property type="molecule type" value="mRNA"/>
</dbReference>
<dbReference type="EMBL" id="AK165440">
    <property type="protein sequence ID" value="BAE38188.1"/>
    <property type="molecule type" value="mRNA"/>
</dbReference>
<dbReference type="EMBL" id="AK165518">
    <property type="protein sequence ID" value="BAE38233.1"/>
    <property type="molecule type" value="mRNA"/>
</dbReference>
<dbReference type="EMBL" id="BC025442">
    <property type="protein sequence ID" value="AAH25442.1"/>
    <property type="status" value="ALT_INIT"/>
    <property type="molecule type" value="mRNA"/>
</dbReference>
<dbReference type="EMBL" id="BC138244">
    <property type="protein sequence ID" value="AAI38245.1"/>
    <property type="molecule type" value="mRNA"/>
</dbReference>
<dbReference type="EMBL" id="BC138247">
    <property type="protein sequence ID" value="AAI38248.1"/>
    <property type="molecule type" value="mRNA"/>
</dbReference>
<dbReference type="CCDS" id="CCDS23614.1"/>
<dbReference type="RefSeq" id="NP_001028381.1">
    <property type="nucleotide sequence ID" value="NM_001033209.3"/>
</dbReference>
<dbReference type="RefSeq" id="NP_001186497.1">
    <property type="nucleotide sequence ID" value="NM_001199568.1"/>
</dbReference>
<dbReference type="SMR" id="Q3TNA1"/>
<dbReference type="BioGRID" id="221878">
    <property type="interactions" value="5"/>
</dbReference>
<dbReference type="FunCoup" id="Q3TNA1">
    <property type="interactions" value="698"/>
</dbReference>
<dbReference type="STRING" id="10090.ENSMUSP00000047254"/>
<dbReference type="iPTMnet" id="Q3TNA1"/>
<dbReference type="PhosphoSitePlus" id="Q3TNA1"/>
<dbReference type="SwissPalm" id="Q3TNA1"/>
<dbReference type="jPOST" id="Q3TNA1"/>
<dbReference type="PaxDb" id="10090-ENSMUSP00000047254"/>
<dbReference type="PeptideAtlas" id="Q3TNA1"/>
<dbReference type="ProteomicsDB" id="297656"/>
<dbReference type="Pumba" id="Q3TNA1"/>
<dbReference type="Antibodypedia" id="28592">
    <property type="antibodies" value="81 antibodies from 18 providers"/>
</dbReference>
<dbReference type="DNASU" id="102448"/>
<dbReference type="Ensembl" id="ENSMUST00000039610.10">
    <property type="protein sequence ID" value="ENSMUSP00000047254.9"/>
    <property type="gene ID" value="ENSMUSG00000035769.10"/>
</dbReference>
<dbReference type="GeneID" id="102448"/>
<dbReference type="KEGG" id="mmu:102448"/>
<dbReference type="UCSC" id="uc009sat.2">
    <property type="organism name" value="mouse"/>
</dbReference>
<dbReference type="AGR" id="MGI:2142985"/>
<dbReference type="CTD" id="9942"/>
<dbReference type="MGI" id="MGI:2142985">
    <property type="gene designation" value="Xylb"/>
</dbReference>
<dbReference type="VEuPathDB" id="HostDB:ENSMUSG00000035769"/>
<dbReference type="eggNOG" id="KOG2531">
    <property type="taxonomic scope" value="Eukaryota"/>
</dbReference>
<dbReference type="GeneTree" id="ENSGT01000000214434"/>
<dbReference type="HOGENOM" id="CLU_016149_8_0_1"/>
<dbReference type="InParanoid" id="Q3TNA1"/>
<dbReference type="OMA" id="NSCALGG"/>
<dbReference type="OrthoDB" id="1728974at2759"/>
<dbReference type="PhylomeDB" id="Q3TNA1"/>
<dbReference type="TreeFam" id="TF313643"/>
<dbReference type="Reactome" id="R-MMU-5661270">
    <property type="pathway name" value="Formation of xylulose-5-phosphate"/>
</dbReference>
<dbReference type="BioGRID-ORCS" id="102448">
    <property type="hits" value="4 hits in 79 CRISPR screens"/>
</dbReference>
<dbReference type="ChiTaRS" id="Xylb">
    <property type="organism name" value="mouse"/>
</dbReference>
<dbReference type="PRO" id="PR:Q3TNA1"/>
<dbReference type="Proteomes" id="UP000000589">
    <property type="component" value="Chromosome 9"/>
</dbReference>
<dbReference type="RNAct" id="Q3TNA1">
    <property type="molecule type" value="protein"/>
</dbReference>
<dbReference type="Bgee" id="ENSMUSG00000035769">
    <property type="expression patterns" value="Expressed in right kidney and 154 other cell types or tissues"/>
</dbReference>
<dbReference type="ExpressionAtlas" id="Q3TNA1">
    <property type="expression patterns" value="baseline and differential"/>
</dbReference>
<dbReference type="GO" id="GO:0005524">
    <property type="term" value="F:ATP binding"/>
    <property type="evidence" value="ECO:0007669"/>
    <property type="project" value="UniProtKB-KW"/>
</dbReference>
<dbReference type="GO" id="GO:0004856">
    <property type="term" value="F:D-xylulokinase activity"/>
    <property type="evidence" value="ECO:0000250"/>
    <property type="project" value="UniProtKB"/>
</dbReference>
<dbReference type="GO" id="GO:0019640">
    <property type="term" value="P:D-glucuronate catabolic process to D-xylulose 5-phosphate"/>
    <property type="evidence" value="ECO:0000266"/>
    <property type="project" value="MGI"/>
</dbReference>
<dbReference type="GO" id="GO:0042732">
    <property type="term" value="P:D-xylose metabolic process"/>
    <property type="evidence" value="ECO:0007669"/>
    <property type="project" value="UniProtKB-KW"/>
</dbReference>
<dbReference type="GO" id="GO:0005997">
    <property type="term" value="P:xylulose metabolic process"/>
    <property type="evidence" value="ECO:0000250"/>
    <property type="project" value="UniProtKB"/>
</dbReference>
<dbReference type="CDD" id="cd07776">
    <property type="entry name" value="ASKHA_NBD_FGGY_SpXK-like"/>
    <property type="match status" value="1"/>
</dbReference>
<dbReference type="FunFam" id="3.30.420.40:FF:000126">
    <property type="entry name" value="Xylulose kinase"/>
    <property type="match status" value="1"/>
</dbReference>
<dbReference type="Gene3D" id="3.30.420.40">
    <property type="match status" value="2"/>
</dbReference>
<dbReference type="InterPro" id="IPR043129">
    <property type="entry name" value="ATPase_NBD"/>
</dbReference>
<dbReference type="InterPro" id="IPR000577">
    <property type="entry name" value="Carb_kinase_FGGY"/>
</dbReference>
<dbReference type="InterPro" id="IPR042024">
    <property type="entry name" value="D-XK_euk"/>
</dbReference>
<dbReference type="InterPro" id="IPR018485">
    <property type="entry name" value="FGGY_C"/>
</dbReference>
<dbReference type="InterPro" id="IPR018484">
    <property type="entry name" value="FGGY_N"/>
</dbReference>
<dbReference type="PANTHER" id="PTHR10196">
    <property type="entry name" value="SUGAR KINASE"/>
    <property type="match status" value="1"/>
</dbReference>
<dbReference type="PANTHER" id="PTHR10196:SF57">
    <property type="entry name" value="XYLULOSE KINASE"/>
    <property type="match status" value="1"/>
</dbReference>
<dbReference type="Pfam" id="PF02782">
    <property type="entry name" value="FGGY_C"/>
    <property type="match status" value="1"/>
</dbReference>
<dbReference type="Pfam" id="PF00370">
    <property type="entry name" value="FGGY_N"/>
    <property type="match status" value="1"/>
</dbReference>
<dbReference type="PIRSF" id="PIRSF000538">
    <property type="entry name" value="GlpK"/>
    <property type="match status" value="1"/>
</dbReference>
<dbReference type="SUPFAM" id="SSF53067">
    <property type="entry name" value="Actin-like ATPase domain"/>
    <property type="match status" value="2"/>
</dbReference>
<keyword id="KW-0067">ATP-binding</keyword>
<keyword id="KW-0119">Carbohydrate metabolism</keyword>
<keyword id="KW-0418">Kinase</keyword>
<keyword id="KW-0547">Nucleotide-binding</keyword>
<keyword id="KW-1185">Reference proteome</keyword>
<keyword id="KW-0808">Transferase</keyword>
<keyword id="KW-0859">Xylose metabolism</keyword>
<name>XYLB_MOUSE</name>
<organism>
    <name type="scientific">Mus musculus</name>
    <name type="common">Mouse</name>
    <dbReference type="NCBI Taxonomy" id="10090"/>
    <lineage>
        <taxon>Eukaryota</taxon>
        <taxon>Metazoa</taxon>
        <taxon>Chordata</taxon>
        <taxon>Craniata</taxon>
        <taxon>Vertebrata</taxon>
        <taxon>Euteleostomi</taxon>
        <taxon>Mammalia</taxon>
        <taxon>Eutheria</taxon>
        <taxon>Euarchontoglires</taxon>
        <taxon>Glires</taxon>
        <taxon>Rodentia</taxon>
        <taxon>Myomorpha</taxon>
        <taxon>Muroidea</taxon>
        <taxon>Muridae</taxon>
        <taxon>Murinae</taxon>
        <taxon>Mus</taxon>
        <taxon>Mus</taxon>
    </lineage>
</organism>
<gene>
    <name type="primary">Xylb</name>
</gene>
<proteinExistence type="evidence at protein level"/>
<feature type="chain" id="PRO_0000230986" description="Xylulose kinase">
    <location>
        <begin position="1"/>
        <end position="551"/>
    </location>
</feature>
<feature type="binding site" evidence="1">
    <location>
        <position position="114"/>
    </location>
    <ligand>
        <name>substrate</name>
    </ligand>
</feature>
<feature type="binding site" evidence="1">
    <location>
        <position position="185"/>
    </location>
    <ligand>
        <name>substrate</name>
    </ligand>
</feature>
<feature type="binding site" evidence="1">
    <location>
        <position position="295"/>
    </location>
    <ligand>
        <name>substrate</name>
    </ligand>
</feature>
<feature type="binding site" evidence="1">
    <location>
        <position position="296"/>
    </location>
    <ligand>
        <name>substrate</name>
    </ligand>
</feature>
<feature type="binding site" evidence="1">
    <location>
        <position position="370"/>
    </location>
    <ligand>
        <name>ATP</name>
        <dbReference type="ChEBI" id="CHEBI:30616"/>
    </ligand>
</feature>
<feature type="binding site" evidence="1">
    <location>
        <begin position="456"/>
        <end position="457"/>
    </location>
    <ligand>
        <name>ATP</name>
        <dbReference type="ChEBI" id="CHEBI:30616"/>
    </ligand>
</feature>
<feature type="binding site" evidence="1">
    <location>
        <position position="460"/>
    </location>
    <ligand>
        <name>ATP</name>
        <dbReference type="ChEBI" id="CHEBI:30616"/>
    </ligand>
</feature>
<reference key="1">
    <citation type="journal article" date="2005" name="Science">
        <title>The transcriptional landscape of the mammalian genome.</title>
        <authorList>
            <person name="Carninci P."/>
            <person name="Kasukawa T."/>
            <person name="Katayama S."/>
            <person name="Gough J."/>
            <person name="Frith M.C."/>
            <person name="Maeda N."/>
            <person name="Oyama R."/>
            <person name="Ravasi T."/>
            <person name="Lenhard B."/>
            <person name="Wells C."/>
            <person name="Kodzius R."/>
            <person name="Shimokawa K."/>
            <person name="Bajic V.B."/>
            <person name="Brenner S.E."/>
            <person name="Batalov S."/>
            <person name="Forrest A.R."/>
            <person name="Zavolan M."/>
            <person name="Davis M.J."/>
            <person name="Wilming L.G."/>
            <person name="Aidinis V."/>
            <person name="Allen J.E."/>
            <person name="Ambesi-Impiombato A."/>
            <person name="Apweiler R."/>
            <person name="Aturaliya R.N."/>
            <person name="Bailey T.L."/>
            <person name="Bansal M."/>
            <person name="Baxter L."/>
            <person name="Beisel K.W."/>
            <person name="Bersano T."/>
            <person name="Bono H."/>
            <person name="Chalk A.M."/>
            <person name="Chiu K.P."/>
            <person name="Choudhary V."/>
            <person name="Christoffels A."/>
            <person name="Clutterbuck D.R."/>
            <person name="Crowe M.L."/>
            <person name="Dalla E."/>
            <person name="Dalrymple B.P."/>
            <person name="de Bono B."/>
            <person name="Della Gatta G."/>
            <person name="di Bernardo D."/>
            <person name="Down T."/>
            <person name="Engstrom P."/>
            <person name="Fagiolini M."/>
            <person name="Faulkner G."/>
            <person name="Fletcher C.F."/>
            <person name="Fukushima T."/>
            <person name="Furuno M."/>
            <person name="Futaki S."/>
            <person name="Gariboldi M."/>
            <person name="Georgii-Hemming P."/>
            <person name="Gingeras T.R."/>
            <person name="Gojobori T."/>
            <person name="Green R.E."/>
            <person name="Gustincich S."/>
            <person name="Harbers M."/>
            <person name="Hayashi Y."/>
            <person name="Hensch T.K."/>
            <person name="Hirokawa N."/>
            <person name="Hill D."/>
            <person name="Huminiecki L."/>
            <person name="Iacono M."/>
            <person name="Ikeo K."/>
            <person name="Iwama A."/>
            <person name="Ishikawa T."/>
            <person name="Jakt M."/>
            <person name="Kanapin A."/>
            <person name="Katoh M."/>
            <person name="Kawasawa Y."/>
            <person name="Kelso J."/>
            <person name="Kitamura H."/>
            <person name="Kitano H."/>
            <person name="Kollias G."/>
            <person name="Krishnan S.P."/>
            <person name="Kruger A."/>
            <person name="Kummerfeld S.K."/>
            <person name="Kurochkin I.V."/>
            <person name="Lareau L.F."/>
            <person name="Lazarevic D."/>
            <person name="Lipovich L."/>
            <person name="Liu J."/>
            <person name="Liuni S."/>
            <person name="McWilliam S."/>
            <person name="Madan Babu M."/>
            <person name="Madera M."/>
            <person name="Marchionni L."/>
            <person name="Matsuda H."/>
            <person name="Matsuzawa S."/>
            <person name="Miki H."/>
            <person name="Mignone F."/>
            <person name="Miyake S."/>
            <person name="Morris K."/>
            <person name="Mottagui-Tabar S."/>
            <person name="Mulder N."/>
            <person name="Nakano N."/>
            <person name="Nakauchi H."/>
            <person name="Ng P."/>
            <person name="Nilsson R."/>
            <person name="Nishiguchi S."/>
            <person name="Nishikawa S."/>
            <person name="Nori F."/>
            <person name="Ohara O."/>
            <person name="Okazaki Y."/>
            <person name="Orlando V."/>
            <person name="Pang K.C."/>
            <person name="Pavan W.J."/>
            <person name="Pavesi G."/>
            <person name="Pesole G."/>
            <person name="Petrovsky N."/>
            <person name="Piazza S."/>
            <person name="Reed J."/>
            <person name="Reid J.F."/>
            <person name="Ring B.Z."/>
            <person name="Ringwald M."/>
            <person name="Rost B."/>
            <person name="Ruan Y."/>
            <person name="Salzberg S.L."/>
            <person name="Sandelin A."/>
            <person name="Schneider C."/>
            <person name="Schoenbach C."/>
            <person name="Sekiguchi K."/>
            <person name="Semple C.A."/>
            <person name="Seno S."/>
            <person name="Sessa L."/>
            <person name="Sheng Y."/>
            <person name="Shibata Y."/>
            <person name="Shimada H."/>
            <person name="Shimada K."/>
            <person name="Silva D."/>
            <person name="Sinclair B."/>
            <person name="Sperling S."/>
            <person name="Stupka E."/>
            <person name="Sugiura K."/>
            <person name="Sultana R."/>
            <person name="Takenaka Y."/>
            <person name="Taki K."/>
            <person name="Tammoja K."/>
            <person name="Tan S.L."/>
            <person name="Tang S."/>
            <person name="Taylor M.S."/>
            <person name="Tegner J."/>
            <person name="Teichmann S.A."/>
            <person name="Ueda H.R."/>
            <person name="van Nimwegen E."/>
            <person name="Verardo R."/>
            <person name="Wei C.L."/>
            <person name="Yagi K."/>
            <person name="Yamanishi H."/>
            <person name="Zabarovsky E."/>
            <person name="Zhu S."/>
            <person name="Zimmer A."/>
            <person name="Hide W."/>
            <person name="Bult C."/>
            <person name="Grimmond S.M."/>
            <person name="Teasdale R.D."/>
            <person name="Liu E.T."/>
            <person name="Brusic V."/>
            <person name="Quackenbush J."/>
            <person name="Wahlestedt C."/>
            <person name="Mattick J.S."/>
            <person name="Hume D.A."/>
            <person name="Kai C."/>
            <person name="Sasaki D."/>
            <person name="Tomaru Y."/>
            <person name="Fukuda S."/>
            <person name="Kanamori-Katayama M."/>
            <person name="Suzuki M."/>
            <person name="Aoki J."/>
            <person name="Arakawa T."/>
            <person name="Iida J."/>
            <person name="Imamura K."/>
            <person name="Itoh M."/>
            <person name="Kato T."/>
            <person name="Kawaji H."/>
            <person name="Kawagashira N."/>
            <person name="Kawashima T."/>
            <person name="Kojima M."/>
            <person name="Kondo S."/>
            <person name="Konno H."/>
            <person name="Nakano K."/>
            <person name="Ninomiya N."/>
            <person name="Nishio T."/>
            <person name="Okada M."/>
            <person name="Plessy C."/>
            <person name="Shibata K."/>
            <person name="Shiraki T."/>
            <person name="Suzuki S."/>
            <person name="Tagami M."/>
            <person name="Waki K."/>
            <person name="Watahiki A."/>
            <person name="Okamura-Oho Y."/>
            <person name="Suzuki H."/>
            <person name="Kawai J."/>
            <person name="Hayashizaki Y."/>
        </authorList>
    </citation>
    <scope>NUCLEOTIDE SEQUENCE [LARGE SCALE MRNA]</scope>
    <source>
        <strain>C57BL/6J</strain>
        <tissue>Kidney</tissue>
    </source>
</reference>
<reference key="2">
    <citation type="journal article" date="2004" name="Genome Res.">
        <title>The status, quality, and expansion of the NIH full-length cDNA project: the Mammalian Gene Collection (MGC).</title>
        <authorList>
            <consortium name="The MGC Project Team"/>
        </authorList>
    </citation>
    <scope>NUCLEOTIDE SEQUENCE [LARGE SCALE MRNA]</scope>
    <source>
        <strain>FVB/N</strain>
        <tissue>Brain</tissue>
        <tissue>Kidney</tissue>
    </source>
</reference>
<reference key="3">
    <citation type="journal article" date="2010" name="Cell">
        <title>A tissue-specific atlas of mouse protein phosphorylation and expression.</title>
        <authorList>
            <person name="Huttlin E.L."/>
            <person name="Jedrychowski M.P."/>
            <person name="Elias J.E."/>
            <person name="Goswami T."/>
            <person name="Rad R."/>
            <person name="Beausoleil S.A."/>
            <person name="Villen J."/>
            <person name="Haas W."/>
            <person name="Sowa M.E."/>
            <person name="Gygi S.P."/>
        </authorList>
    </citation>
    <scope>IDENTIFICATION BY MASS SPECTROMETRY [LARGE SCALE ANALYSIS]</scope>
    <source>
        <tissue>Kidney</tissue>
        <tissue>Liver</tissue>
    </source>
</reference>
<accession>Q3TNA1</accession>
<accession>B2RR66</accession>
<accession>Q8R156</accession>
<comment type="function">
    <text evidence="1">Phosphorylates D-xylulose to produce D-xylulose 5-phosphate, a molecule that may play an important role in the regulation of glucose metabolism and lipogenesis.</text>
</comment>
<comment type="catalytic activity">
    <reaction>
        <text>D-xylulose + ATP = D-xylulose 5-phosphate + ADP + H(+)</text>
        <dbReference type="Rhea" id="RHEA:10964"/>
        <dbReference type="ChEBI" id="CHEBI:15378"/>
        <dbReference type="ChEBI" id="CHEBI:17140"/>
        <dbReference type="ChEBI" id="CHEBI:30616"/>
        <dbReference type="ChEBI" id="CHEBI:57737"/>
        <dbReference type="ChEBI" id="CHEBI:456216"/>
        <dbReference type="EC" id="2.7.1.17"/>
    </reaction>
</comment>
<comment type="subunit">
    <text evidence="1">Monomer.</text>
</comment>
<comment type="similarity">
    <text evidence="2">Belongs to the FGGY kinase family.</text>
</comment>
<comment type="sequence caution" evidence="2">
    <conflict type="erroneous initiation">
        <sequence resource="EMBL-CDS" id="AAH25442"/>
    </conflict>
</comment>